<gene>
    <name type="primary">Rbm41</name>
</gene>
<proteinExistence type="evidence at transcript level"/>
<accession>Q8JZV4</accession>
<accession>A2AG07</accession>
<accession>Q3TMC8</accession>
<accession>Q3TPC6</accession>
<accession>Q8C9Y2</accession>
<protein>
    <recommendedName>
        <fullName>RNA-binding protein 41</fullName>
    </recommendedName>
    <alternativeName>
        <fullName>RNA-binding motif protein 41</fullName>
    </alternativeName>
</protein>
<feature type="chain" id="PRO_0000256268" description="RNA-binding protein 41">
    <location>
        <begin position="1"/>
        <end position="413"/>
    </location>
</feature>
<feature type="domain" description="RRM" evidence="1">
    <location>
        <begin position="309"/>
        <end position="387"/>
    </location>
</feature>
<feature type="region of interest" description="Disordered" evidence="2">
    <location>
        <begin position="225"/>
        <end position="247"/>
    </location>
</feature>
<feature type="splice variant" id="VSP_021350" description="In isoform 2." evidence="3">
    <original>MK</original>
    <variation>MASASSVLSLRLSS</variation>
    <location>
        <begin position="1"/>
        <end position="2"/>
    </location>
</feature>
<feature type="splice variant" id="VSP_021352" description="In isoform 4." evidence="3">
    <location>
        <begin position="310"/>
        <end position="333"/>
    </location>
</feature>
<feature type="splice variant" id="VSP_021351" description="In isoform 3." evidence="3">
    <original>NKDIAWQALHQINGYKLYGKILVIEFAKSKKQQSAVQRSSLITSAPDGRTEINGS</original>
    <variation>RERISRRPCYFHWEYLTIFNSVALPRMVLKTASSELFKQHELSLGF</variation>
    <location>
        <begin position="359"/>
        <end position="413"/>
    </location>
</feature>
<feature type="splice variant" id="VSP_021353" description="In isoform 4." evidence="3">
    <original>KDI</original>
    <variation>RIPA</variation>
    <location>
        <begin position="360"/>
        <end position="362"/>
    </location>
</feature>
<feature type="splice variant" id="VSP_021354" description="In isoform 4." evidence="3">
    <location>
        <begin position="363"/>
        <end position="413"/>
    </location>
</feature>
<feature type="sequence conflict" description="In Ref. 1; BAE37811." evidence="4" ref="1">
    <original>P</original>
    <variation>S</variation>
    <location>
        <position position="268"/>
    </location>
</feature>
<reference key="1">
    <citation type="journal article" date="2005" name="Science">
        <title>The transcriptional landscape of the mammalian genome.</title>
        <authorList>
            <person name="Carninci P."/>
            <person name="Kasukawa T."/>
            <person name="Katayama S."/>
            <person name="Gough J."/>
            <person name="Frith M.C."/>
            <person name="Maeda N."/>
            <person name="Oyama R."/>
            <person name="Ravasi T."/>
            <person name="Lenhard B."/>
            <person name="Wells C."/>
            <person name="Kodzius R."/>
            <person name="Shimokawa K."/>
            <person name="Bajic V.B."/>
            <person name="Brenner S.E."/>
            <person name="Batalov S."/>
            <person name="Forrest A.R."/>
            <person name="Zavolan M."/>
            <person name="Davis M.J."/>
            <person name="Wilming L.G."/>
            <person name="Aidinis V."/>
            <person name="Allen J.E."/>
            <person name="Ambesi-Impiombato A."/>
            <person name="Apweiler R."/>
            <person name="Aturaliya R.N."/>
            <person name="Bailey T.L."/>
            <person name="Bansal M."/>
            <person name="Baxter L."/>
            <person name="Beisel K.W."/>
            <person name="Bersano T."/>
            <person name="Bono H."/>
            <person name="Chalk A.M."/>
            <person name="Chiu K.P."/>
            <person name="Choudhary V."/>
            <person name="Christoffels A."/>
            <person name="Clutterbuck D.R."/>
            <person name="Crowe M.L."/>
            <person name="Dalla E."/>
            <person name="Dalrymple B.P."/>
            <person name="de Bono B."/>
            <person name="Della Gatta G."/>
            <person name="di Bernardo D."/>
            <person name="Down T."/>
            <person name="Engstrom P."/>
            <person name="Fagiolini M."/>
            <person name="Faulkner G."/>
            <person name="Fletcher C.F."/>
            <person name="Fukushima T."/>
            <person name="Furuno M."/>
            <person name="Futaki S."/>
            <person name="Gariboldi M."/>
            <person name="Georgii-Hemming P."/>
            <person name="Gingeras T.R."/>
            <person name="Gojobori T."/>
            <person name="Green R.E."/>
            <person name="Gustincich S."/>
            <person name="Harbers M."/>
            <person name="Hayashi Y."/>
            <person name="Hensch T.K."/>
            <person name="Hirokawa N."/>
            <person name="Hill D."/>
            <person name="Huminiecki L."/>
            <person name="Iacono M."/>
            <person name="Ikeo K."/>
            <person name="Iwama A."/>
            <person name="Ishikawa T."/>
            <person name="Jakt M."/>
            <person name="Kanapin A."/>
            <person name="Katoh M."/>
            <person name="Kawasawa Y."/>
            <person name="Kelso J."/>
            <person name="Kitamura H."/>
            <person name="Kitano H."/>
            <person name="Kollias G."/>
            <person name="Krishnan S.P."/>
            <person name="Kruger A."/>
            <person name="Kummerfeld S.K."/>
            <person name="Kurochkin I.V."/>
            <person name="Lareau L.F."/>
            <person name="Lazarevic D."/>
            <person name="Lipovich L."/>
            <person name="Liu J."/>
            <person name="Liuni S."/>
            <person name="McWilliam S."/>
            <person name="Madan Babu M."/>
            <person name="Madera M."/>
            <person name="Marchionni L."/>
            <person name="Matsuda H."/>
            <person name="Matsuzawa S."/>
            <person name="Miki H."/>
            <person name="Mignone F."/>
            <person name="Miyake S."/>
            <person name="Morris K."/>
            <person name="Mottagui-Tabar S."/>
            <person name="Mulder N."/>
            <person name="Nakano N."/>
            <person name="Nakauchi H."/>
            <person name="Ng P."/>
            <person name="Nilsson R."/>
            <person name="Nishiguchi S."/>
            <person name="Nishikawa S."/>
            <person name="Nori F."/>
            <person name="Ohara O."/>
            <person name="Okazaki Y."/>
            <person name="Orlando V."/>
            <person name="Pang K.C."/>
            <person name="Pavan W.J."/>
            <person name="Pavesi G."/>
            <person name="Pesole G."/>
            <person name="Petrovsky N."/>
            <person name="Piazza S."/>
            <person name="Reed J."/>
            <person name="Reid J.F."/>
            <person name="Ring B.Z."/>
            <person name="Ringwald M."/>
            <person name="Rost B."/>
            <person name="Ruan Y."/>
            <person name="Salzberg S.L."/>
            <person name="Sandelin A."/>
            <person name="Schneider C."/>
            <person name="Schoenbach C."/>
            <person name="Sekiguchi K."/>
            <person name="Semple C.A."/>
            <person name="Seno S."/>
            <person name="Sessa L."/>
            <person name="Sheng Y."/>
            <person name="Shibata Y."/>
            <person name="Shimada H."/>
            <person name="Shimada K."/>
            <person name="Silva D."/>
            <person name="Sinclair B."/>
            <person name="Sperling S."/>
            <person name="Stupka E."/>
            <person name="Sugiura K."/>
            <person name="Sultana R."/>
            <person name="Takenaka Y."/>
            <person name="Taki K."/>
            <person name="Tammoja K."/>
            <person name="Tan S.L."/>
            <person name="Tang S."/>
            <person name="Taylor M.S."/>
            <person name="Tegner J."/>
            <person name="Teichmann S.A."/>
            <person name="Ueda H.R."/>
            <person name="van Nimwegen E."/>
            <person name="Verardo R."/>
            <person name="Wei C.L."/>
            <person name="Yagi K."/>
            <person name="Yamanishi H."/>
            <person name="Zabarovsky E."/>
            <person name="Zhu S."/>
            <person name="Zimmer A."/>
            <person name="Hide W."/>
            <person name="Bult C."/>
            <person name="Grimmond S.M."/>
            <person name="Teasdale R.D."/>
            <person name="Liu E.T."/>
            <person name="Brusic V."/>
            <person name="Quackenbush J."/>
            <person name="Wahlestedt C."/>
            <person name="Mattick J.S."/>
            <person name="Hume D.A."/>
            <person name="Kai C."/>
            <person name="Sasaki D."/>
            <person name="Tomaru Y."/>
            <person name="Fukuda S."/>
            <person name="Kanamori-Katayama M."/>
            <person name="Suzuki M."/>
            <person name="Aoki J."/>
            <person name="Arakawa T."/>
            <person name="Iida J."/>
            <person name="Imamura K."/>
            <person name="Itoh M."/>
            <person name="Kato T."/>
            <person name="Kawaji H."/>
            <person name="Kawagashira N."/>
            <person name="Kawashima T."/>
            <person name="Kojima M."/>
            <person name="Kondo S."/>
            <person name="Konno H."/>
            <person name="Nakano K."/>
            <person name="Ninomiya N."/>
            <person name="Nishio T."/>
            <person name="Okada M."/>
            <person name="Plessy C."/>
            <person name="Shibata K."/>
            <person name="Shiraki T."/>
            <person name="Suzuki S."/>
            <person name="Tagami M."/>
            <person name="Waki K."/>
            <person name="Watahiki A."/>
            <person name="Okamura-Oho Y."/>
            <person name="Suzuki H."/>
            <person name="Kawai J."/>
            <person name="Hayashizaki Y."/>
        </authorList>
    </citation>
    <scope>NUCLEOTIDE SEQUENCE [LARGE SCALE MRNA] (ISOFORMS 1; 2; 3 AND 4)</scope>
    <source>
        <strain>C57BL/6J</strain>
        <tissue>Embryonic heart</tissue>
        <tissue>Lung</tissue>
        <tissue>Thymus</tissue>
    </source>
</reference>
<reference key="2">
    <citation type="journal article" date="2009" name="PLoS Biol.">
        <title>Lineage-specific biology revealed by a finished genome assembly of the mouse.</title>
        <authorList>
            <person name="Church D.M."/>
            <person name="Goodstadt L."/>
            <person name="Hillier L.W."/>
            <person name="Zody M.C."/>
            <person name="Goldstein S."/>
            <person name="She X."/>
            <person name="Bult C.J."/>
            <person name="Agarwala R."/>
            <person name="Cherry J.L."/>
            <person name="DiCuccio M."/>
            <person name="Hlavina W."/>
            <person name="Kapustin Y."/>
            <person name="Meric P."/>
            <person name="Maglott D."/>
            <person name="Birtle Z."/>
            <person name="Marques A.C."/>
            <person name="Graves T."/>
            <person name="Zhou S."/>
            <person name="Teague B."/>
            <person name="Potamousis K."/>
            <person name="Churas C."/>
            <person name="Place M."/>
            <person name="Herschleb J."/>
            <person name="Runnheim R."/>
            <person name="Forrest D."/>
            <person name="Amos-Landgraf J."/>
            <person name="Schwartz D.C."/>
            <person name="Cheng Z."/>
            <person name="Lindblad-Toh K."/>
            <person name="Eichler E.E."/>
            <person name="Ponting C.P."/>
        </authorList>
    </citation>
    <scope>NUCLEOTIDE SEQUENCE [LARGE SCALE GENOMIC DNA]</scope>
    <source>
        <strain>C57BL/6J</strain>
    </source>
</reference>
<reference key="3">
    <citation type="journal article" date="2004" name="Genome Res.">
        <title>The status, quality, and expansion of the NIH full-length cDNA project: the Mammalian Gene Collection (MGC).</title>
        <authorList>
            <consortium name="The MGC Project Team"/>
        </authorList>
    </citation>
    <scope>NUCLEOTIDE SEQUENCE [LARGE SCALE MRNA] (ISOFORM 1)</scope>
    <source>
        <tissue>Eye</tissue>
    </source>
</reference>
<dbReference type="EMBL" id="AK040213">
    <property type="protein sequence ID" value="BAC30541.1"/>
    <property type="molecule type" value="mRNA"/>
</dbReference>
<dbReference type="EMBL" id="AK084514">
    <property type="protein sequence ID" value="BAC39206.1"/>
    <property type="molecule type" value="mRNA"/>
</dbReference>
<dbReference type="EMBL" id="AK084629">
    <property type="protein sequence ID" value="BAC39235.1"/>
    <property type="molecule type" value="mRNA"/>
</dbReference>
<dbReference type="EMBL" id="AK164496">
    <property type="protein sequence ID" value="BAE37811.1"/>
    <property type="molecule type" value="mRNA"/>
</dbReference>
<dbReference type="EMBL" id="AK166005">
    <property type="protein sequence ID" value="BAE38514.1"/>
    <property type="molecule type" value="mRNA"/>
</dbReference>
<dbReference type="EMBL" id="AL672270">
    <property type="status" value="NOT_ANNOTATED_CDS"/>
    <property type="molecule type" value="Genomic_DNA"/>
</dbReference>
<dbReference type="EMBL" id="BC037024">
    <property type="protein sequence ID" value="AAH37024.1"/>
    <property type="molecule type" value="mRNA"/>
</dbReference>
<dbReference type="CCDS" id="CCDS41147.1">
    <molecule id="Q8JZV4-1"/>
</dbReference>
<dbReference type="CCDS" id="CCDS53204.1">
    <molecule id="Q8JZV4-2"/>
</dbReference>
<dbReference type="CCDS" id="CCDS53205.1">
    <molecule id="Q8JZV4-3"/>
</dbReference>
<dbReference type="RefSeq" id="NP_001165618.1">
    <molecule id="Q8JZV4-2"/>
    <property type="nucleotide sequence ID" value="NM_001172147.1"/>
</dbReference>
<dbReference type="RefSeq" id="NP_001165619.1">
    <molecule id="Q8JZV4-3"/>
    <property type="nucleotide sequence ID" value="NM_001172148.1"/>
</dbReference>
<dbReference type="RefSeq" id="NP_001277559.1">
    <property type="nucleotide sequence ID" value="NM_001290630.1"/>
</dbReference>
<dbReference type="RefSeq" id="NP_705814.1">
    <molecule id="Q8JZV4-1"/>
    <property type="nucleotide sequence ID" value="NM_153586.2"/>
</dbReference>
<dbReference type="SMR" id="Q8JZV4"/>
<dbReference type="BioGRID" id="231837">
    <property type="interactions" value="2"/>
</dbReference>
<dbReference type="FunCoup" id="Q8JZV4">
    <property type="interactions" value="1121"/>
</dbReference>
<dbReference type="STRING" id="10090.ENSMUSP00000108634"/>
<dbReference type="PhosphoSitePlus" id="Q8JZV4"/>
<dbReference type="PaxDb" id="10090-ENSMUSP00000108631"/>
<dbReference type="ProteomicsDB" id="300318">
    <molecule id="Q8JZV4-1"/>
</dbReference>
<dbReference type="ProteomicsDB" id="300319">
    <molecule id="Q8JZV4-2"/>
</dbReference>
<dbReference type="ProteomicsDB" id="300320">
    <molecule id="Q8JZV4-3"/>
</dbReference>
<dbReference type="ProteomicsDB" id="300321">
    <molecule id="Q8JZV4-4"/>
</dbReference>
<dbReference type="Antibodypedia" id="29287">
    <property type="antibodies" value="135 antibodies from 19 providers"/>
</dbReference>
<dbReference type="DNASU" id="237073"/>
<dbReference type="Ensembl" id="ENSMUST00000033810.8">
    <molecule id="Q8JZV4-1"/>
    <property type="protein sequence ID" value="ENSMUSP00000033810.8"/>
    <property type="gene ID" value="ENSMUSG00000031433.16"/>
</dbReference>
<dbReference type="Ensembl" id="ENSMUST00000087400.12">
    <molecule id="Q8JZV4-3"/>
    <property type="protein sequence ID" value="ENSMUSP00000084662.6"/>
    <property type="gene ID" value="ENSMUSG00000031433.16"/>
</dbReference>
<dbReference type="Ensembl" id="ENSMUST00000113007.8">
    <molecule id="Q8JZV4-2"/>
    <property type="protein sequence ID" value="ENSMUSP00000108631.2"/>
    <property type="gene ID" value="ENSMUSG00000031433.16"/>
</dbReference>
<dbReference type="GeneID" id="237073"/>
<dbReference type="KEGG" id="mmu:237073"/>
<dbReference type="UCSC" id="uc009ukp.2">
    <molecule id="Q8JZV4-3"/>
    <property type="organism name" value="mouse"/>
</dbReference>
<dbReference type="UCSC" id="uc009ukq.2">
    <molecule id="Q8JZV4-4"/>
    <property type="organism name" value="mouse"/>
</dbReference>
<dbReference type="UCSC" id="uc009ukr.2">
    <molecule id="Q8JZV4-1"/>
    <property type="organism name" value="mouse"/>
</dbReference>
<dbReference type="UCSC" id="uc012hpl.1">
    <molecule id="Q8JZV4-2"/>
    <property type="organism name" value="mouse"/>
</dbReference>
<dbReference type="AGR" id="MGI:2444923"/>
<dbReference type="CTD" id="55285"/>
<dbReference type="MGI" id="MGI:2444923">
    <property type="gene designation" value="Rbm41"/>
</dbReference>
<dbReference type="VEuPathDB" id="HostDB:ENSMUSG00000031433"/>
<dbReference type="eggNOG" id="ENOG502RIV3">
    <property type="taxonomic scope" value="Eukaryota"/>
</dbReference>
<dbReference type="GeneTree" id="ENSGT00530000063786"/>
<dbReference type="HOGENOM" id="CLU_054957_0_0_1"/>
<dbReference type="InParanoid" id="Q8JZV4"/>
<dbReference type="OMA" id="ELMALFC"/>
<dbReference type="OrthoDB" id="277802at2759"/>
<dbReference type="PhylomeDB" id="Q8JZV4"/>
<dbReference type="TreeFam" id="TF324298"/>
<dbReference type="BioGRID-ORCS" id="237073">
    <property type="hits" value="5 hits in 77 CRISPR screens"/>
</dbReference>
<dbReference type="PRO" id="PR:Q8JZV4"/>
<dbReference type="Proteomes" id="UP000000589">
    <property type="component" value="Chromosome X"/>
</dbReference>
<dbReference type="RNAct" id="Q8JZV4">
    <property type="molecule type" value="protein"/>
</dbReference>
<dbReference type="Bgee" id="ENSMUSG00000031433">
    <property type="expression patterns" value="Expressed in undifferentiated genital tubercle and 205 other cell types or tissues"/>
</dbReference>
<dbReference type="ExpressionAtlas" id="Q8JZV4">
    <property type="expression patterns" value="baseline and differential"/>
</dbReference>
<dbReference type="GO" id="GO:0003723">
    <property type="term" value="F:RNA binding"/>
    <property type="evidence" value="ECO:0007669"/>
    <property type="project" value="UniProtKB-KW"/>
</dbReference>
<dbReference type="CDD" id="cd12239">
    <property type="entry name" value="RRM2_RBM40_like"/>
    <property type="match status" value="1"/>
</dbReference>
<dbReference type="FunFam" id="3.30.70.330:FF:000252">
    <property type="entry name" value="RNA binding motif protein 41"/>
    <property type="match status" value="1"/>
</dbReference>
<dbReference type="Gene3D" id="3.30.70.330">
    <property type="match status" value="1"/>
</dbReference>
<dbReference type="InterPro" id="IPR012677">
    <property type="entry name" value="Nucleotide-bd_a/b_plait_sf"/>
</dbReference>
<dbReference type="InterPro" id="IPR035979">
    <property type="entry name" value="RBD_domain_sf"/>
</dbReference>
<dbReference type="InterPro" id="IPR045164">
    <property type="entry name" value="RBM41/RNPC3"/>
</dbReference>
<dbReference type="InterPro" id="IPR000504">
    <property type="entry name" value="RRM_dom"/>
</dbReference>
<dbReference type="PANTHER" id="PTHR16105:SF2">
    <property type="entry name" value="RNA-BINDING PROTEIN 41"/>
    <property type="match status" value="1"/>
</dbReference>
<dbReference type="PANTHER" id="PTHR16105">
    <property type="entry name" value="RNA-BINDING REGION-CONTAINING PROTEIN 3"/>
    <property type="match status" value="1"/>
</dbReference>
<dbReference type="Pfam" id="PF00076">
    <property type="entry name" value="RRM_1"/>
    <property type="match status" value="1"/>
</dbReference>
<dbReference type="SMART" id="SM00360">
    <property type="entry name" value="RRM"/>
    <property type="match status" value="1"/>
</dbReference>
<dbReference type="SUPFAM" id="SSF54928">
    <property type="entry name" value="RNA-binding domain, RBD"/>
    <property type="match status" value="1"/>
</dbReference>
<dbReference type="PROSITE" id="PS50102">
    <property type="entry name" value="RRM"/>
    <property type="match status" value="1"/>
</dbReference>
<evidence type="ECO:0000255" key="1">
    <source>
        <dbReference type="PROSITE-ProRule" id="PRU00176"/>
    </source>
</evidence>
<evidence type="ECO:0000256" key="2">
    <source>
        <dbReference type="SAM" id="MobiDB-lite"/>
    </source>
</evidence>
<evidence type="ECO:0000303" key="3">
    <source>
    </source>
</evidence>
<evidence type="ECO:0000305" key="4"/>
<keyword id="KW-0025">Alternative splicing</keyword>
<keyword id="KW-1185">Reference proteome</keyword>
<keyword id="KW-0694">RNA-binding</keyword>
<comment type="function">
    <text evidence="4">May bind RNA.</text>
</comment>
<comment type="alternative products">
    <event type="alternative splicing"/>
    <isoform>
        <id>Q8JZV4-1</id>
        <name>1</name>
        <sequence type="displayed"/>
    </isoform>
    <isoform>
        <id>Q8JZV4-2</id>
        <name>2</name>
        <sequence type="described" ref="VSP_021350"/>
    </isoform>
    <isoform>
        <id>Q8JZV4-3</id>
        <name>3</name>
        <sequence type="described" ref="VSP_021351"/>
    </isoform>
    <isoform>
        <id>Q8JZV4-4</id>
        <name>4</name>
        <sequence type="described" ref="VSP_021352 VSP_021353 VSP_021354"/>
    </isoform>
</comment>
<organism>
    <name type="scientific">Mus musculus</name>
    <name type="common">Mouse</name>
    <dbReference type="NCBI Taxonomy" id="10090"/>
    <lineage>
        <taxon>Eukaryota</taxon>
        <taxon>Metazoa</taxon>
        <taxon>Chordata</taxon>
        <taxon>Craniata</taxon>
        <taxon>Vertebrata</taxon>
        <taxon>Euteleostomi</taxon>
        <taxon>Mammalia</taxon>
        <taxon>Eutheria</taxon>
        <taxon>Euarchontoglires</taxon>
        <taxon>Glires</taxon>
        <taxon>Rodentia</taxon>
        <taxon>Myomorpha</taxon>
        <taxon>Muroidea</taxon>
        <taxon>Muridae</taxon>
        <taxon>Murinae</taxon>
        <taxon>Mus</taxon>
        <taxon>Mus</taxon>
    </lineage>
</organism>
<name>RBM41_MOUSE</name>
<sequence length="413" mass="47515">MKRVNSCVKDEEHVLEELETEGERQLKSLLQHQLDTSVSIEECVSKKKSFAPGTMYKPFGKEAAGTMTLSQFQTLHEKDQETASLRELGLNETEILIWKSHVSGEKRTKLRATPEAIQKRLEDIKERISERQRILCLPQRFSKSKQLTRREMEIEKSLFQGTDRHSFLKALYYQDEPPKKNKGDPMNNLEHFYRETIMKKRLEEFQLLRGESFACHSLVSAASVSGSGTAEKPSLLQDKGKQAAQGKGPRLHVAKLIDFPTEQYWTGPKTLKQPIEFIPEDEIQRNRLSEEEIRNIPMFSSYNPGEPNKVLYLKNLSPRVKERDLISLFARFQEKKGPPIQFRMMTGRMRGQAFLTFPNKDIAWQALHQINGYKLYGKILVIEFAKSKKQQSAVQRSSLITSAPDGRTEINGS</sequence>